<feature type="chain" id="PRO_0000247188" description="PDZ domain-containing protein GIPC2">
    <location>
        <begin position="1"/>
        <end position="315"/>
    </location>
</feature>
<feature type="domain" description="PDZ" evidence="2">
    <location>
        <begin position="117"/>
        <end position="197"/>
    </location>
</feature>
<feature type="region of interest" description="Disordered" evidence="3">
    <location>
        <begin position="1"/>
        <end position="34"/>
    </location>
</feature>
<feature type="compositionally biased region" description="Basic residues" evidence="3">
    <location>
        <begin position="1"/>
        <end position="12"/>
    </location>
</feature>
<feature type="sequence variant" id="VAR_027084" description="In dbSNP:rs17101180.">
    <original>S</original>
    <variation>F</variation>
    <location>
        <position position="61"/>
    </location>
</feature>
<feature type="sequence variant" id="VAR_027085" description="In dbSNP:rs540742." evidence="5">
    <original>L</original>
    <variation>P</variation>
    <location>
        <position position="206"/>
    </location>
</feature>
<feature type="strand" evidence="7">
    <location>
        <begin position="113"/>
        <end position="121"/>
    </location>
</feature>
<feature type="strand" evidence="7">
    <location>
        <begin position="129"/>
        <end position="132"/>
    </location>
</feature>
<feature type="strand" evidence="7">
    <location>
        <begin position="134"/>
        <end position="137"/>
    </location>
</feature>
<feature type="strand" evidence="7">
    <location>
        <begin position="140"/>
        <end position="144"/>
    </location>
</feature>
<feature type="helix" evidence="7">
    <location>
        <begin position="149"/>
        <end position="152"/>
    </location>
</feature>
<feature type="strand" evidence="7">
    <location>
        <begin position="161"/>
        <end position="165"/>
    </location>
</feature>
<feature type="helix" evidence="7">
    <location>
        <begin position="175"/>
        <end position="184"/>
    </location>
</feature>
<feature type="strand" evidence="7">
    <location>
        <begin position="190"/>
        <end position="198"/>
    </location>
</feature>
<reference key="1">
    <citation type="journal article" date="2002" name="Int. J. Oncol.">
        <title>Molecular cloning and characterization of human GIPC2, a novel gene homologous to human GIPC1 and Xenopus Kermit.</title>
        <authorList>
            <person name="Kirikoshi H."/>
            <person name="Katoh M."/>
        </authorList>
    </citation>
    <scope>NUCLEOTIDE SEQUENCE [MRNA]</scope>
    <scope>TISSUE SPECIFICITY</scope>
</reference>
<reference key="2">
    <citation type="journal article" date="2004" name="Genome Res.">
        <title>The status, quality, and expansion of the NIH full-length cDNA project: the Mammalian Gene Collection (MGC).</title>
        <authorList>
            <consortium name="The MGC Project Team"/>
        </authorList>
    </citation>
    <scope>NUCLEOTIDE SEQUENCE [LARGE SCALE MRNA]</scope>
    <scope>VARIANT PRO-206</scope>
    <source>
        <tissue>Testis</tissue>
    </source>
</reference>
<reference key="3">
    <citation type="journal article" date="2004" name="Nat. Genet.">
        <title>Complete sequencing and characterization of 21,243 full-length human cDNAs.</title>
        <authorList>
            <person name="Ota T."/>
            <person name="Suzuki Y."/>
            <person name="Nishikawa T."/>
            <person name="Otsuki T."/>
            <person name="Sugiyama T."/>
            <person name="Irie R."/>
            <person name="Wakamatsu A."/>
            <person name="Hayashi K."/>
            <person name="Sato H."/>
            <person name="Nagai K."/>
            <person name="Kimura K."/>
            <person name="Makita H."/>
            <person name="Sekine M."/>
            <person name="Obayashi M."/>
            <person name="Nishi T."/>
            <person name="Shibahara T."/>
            <person name="Tanaka T."/>
            <person name="Ishii S."/>
            <person name="Yamamoto J."/>
            <person name="Saito K."/>
            <person name="Kawai Y."/>
            <person name="Isono Y."/>
            <person name="Nakamura Y."/>
            <person name="Nagahari K."/>
            <person name="Murakami K."/>
            <person name="Yasuda T."/>
            <person name="Iwayanagi T."/>
            <person name="Wagatsuma M."/>
            <person name="Shiratori A."/>
            <person name="Sudo H."/>
            <person name="Hosoiri T."/>
            <person name="Kaku Y."/>
            <person name="Kodaira H."/>
            <person name="Kondo H."/>
            <person name="Sugawara M."/>
            <person name="Takahashi M."/>
            <person name="Kanda K."/>
            <person name="Yokoi T."/>
            <person name="Furuya T."/>
            <person name="Kikkawa E."/>
            <person name="Omura Y."/>
            <person name="Abe K."/>
            <person name="Kamihara K."/>
            <person name="Katsuta N."/>
            <person name="Sato K."/>
            <person name="Tanikawa M."/>
            <person name="Yamazaki M."/>
            <person name="Ninomiya K."/>
            <person name="Ishibashi T."/>
            <person name="Yamashita H."/>
            <person name="Murakawa K."/>
            <person name="Fujimori K."/>
            <person name="Tanai H."/>
            <person name="Kimata M."/>
            <person name="Watanabe M."/>
            <person name="Hiraoka S."/>
            <person name="Chiba Y."/>
            <person name="Ishida S."/>
            <person name="Ono Y."/>
            <person name="Takiguchi S."/>
            <person name="Watanabe S."/>
            <person name="Yosida M."/>
            <person name="Hotuta T."/>
            <person name="Kusano J."/>
            <person name="Kanehori K."/>
            <person name="Takahashi-Fujii A."/>
            <person name="Hara H."/>
            <person name="Tanase T.-O."/>
            <person name="Nomura Y."/>
            <person name="Togiya S."/>
            <person name="Komai F."/>
            <person name="Hara R."/>
            <person name="Takeuchi K."/>
            <person name="Arita M."/>
            <person name="Imose N."/>
            <person name="Musashino K."/>
            <person name="Yuuki H."/>
            <person name="Oshima A."/>
            <person name="Sasaki N."/>
            <person name="Aotsuka S."/>
            <person name="Yoshikawa Y."/>
            <person name="Matsunawa H."/>
            <person name="Ichihara T."/>
            <person name="Shiohata N."/>
            <person name="Sano S."/>
            <person name="Moriya S."/>
            <person name="Momiyama H."/>
            <person name="Satoh N."/>
            <person name="Takami S."/>
            <person name="Terashima Y."/>
            <person name="Suzuki O."/>
            <person name="Nakagawa S."/>
            <person name="Senoh A."/>
            <person name="Mizoguchi H."/>
            <person name="Goto Y."/>
            <person name="Shimizu F."/>
            <person name="Wakebe H."/>
            <person name="Hishigaki H."/>
            <person name="Watanabe T."/>
            <person name="Sugiyama A."/>
            <person name="Takemoto M."/>
            <person name="Kawakami B."/>
            <person name="Yamazaki M."/>
            <person name="Watanabe K."/>
            <person name="Kumagai A."/>
            <person name="Itakura S."/>
            <person name="Fukuzumi Y."/>
            <person name="Fujimori Y."/>
            <person name="Komiyama M."/>
            <person name="Tashiro H."/>
            <person name="Tanigami A."/>
            <person name="Fujiwara T."/>
            <person name="Ono T."/>
            <person name="Yamada K."/>
            <person name="Fujii Y."/>
            <person name="Ozaki K."/>
            <person name="Hirao M."/>
            <person name="Ohmori Y."/>
            <person name="Kawabata A."/>
            <person name="Hikiji T."/>
            <person name="Kobatake N."/>
            <person name="Inagaki H."/>
            <person name="Ikema Y."/>
            <person name="Okamoto S."/>
            <person name="Okitani R."/>
            <person name="Kawakami T."/>
            <person name="Noguchi S."/>
            <person name="Itoh T."/>
            <person name="Shigeta K."/>
            <person name="Senba T."/>
            <person name="Matsumura K."/>
            <person name="Nakajima Y."/>
            <person name="Mizuno T."/>
            <person name="Morinaga M."/>
            <person name="Sasaki M."/>
            <person name="Togashi T."/>
            <person name="Oyama M."/>
            <person name="Hata H."/>
            <person name="Watanabe M."/>
            <person name="Komatsu T."/>
            <person name="Mizushima-Sugano J."/>
            <person name="Satoh T."/>
            <person name="Shirai Y."/>
            <person name="Takahashi Y."/>
            <person name="Nakagawa K."/>
            <person name="Okumura K."/>
            <person name="Nagase T."/>
            <person name="Nomura N."/>
            <person name="Kikuchi H."/>
            <person name="Masuho Y."/>
            <person name="Yamashita R."/>
            <person name="Nakai K."/>
            <person name="Yada T."/>
            <person name="Nakamura Y."/>
            <person name="Ohara O."/>
            <person name="Isogai T."/>
            <person name="Sugano S."/>
        </authorList>
    </citation>
    <scope>NUCLEOTIDE SEQUENCE [LARGE SCALE MRNA] OF 85-315</scope>
    <source>
        <tissue>Colon</tissue>
    </source>
</reference>
<reference key="4">
    <citation type="journal article" date="2011" name="BMC Syst. Biol.">
        <title>Initial characterization of the human central proteome.</title>
        <authorList>
            <person name="Burkard T.R."/>
            <person name="Planyavsky M."/>
            <person name="Kaupe I."/>
            <person name="Breitwieser F.P."/>
            <person name="Buerckstuemmer T."/>
            <person name="Bennett K.L."/>
            <person name="Superti-Furga G."/>
            <person name="Colinge J."/>
        </authorList>
    </citation>
    <scope>IDENTIFICATION BY MASS SPECTROMETRY [LARGE SCALE ANALYSIS]</scope>
</reference>
<reference key="5">
    <citation type="journal article" date="2014" name="J. Proteomics">
        <title>An enzyme assisted RP-RPLC approach for in-depth analysis of human liver phosphoproteome.</title>
        <authorList>
            <person name="Bian Y."/>
            <person name="Song C."/>
            <person name="Cheng K."/>
            <person name="Dong M."/>
            <person name="Wang F."/>
            <person name="Huang J."/>
            <person name="Sun D."/>
            <person name="Wang L."/>
            <person name="Ye M."/>
            <person name="Zou H."/>
        </authorList>
    </citation>
    <scope>IDENTIFICATION BY MASS SPECTROMETRY [LARGE SCALE ANALYSIS]</scope>
    <source>
        <tissue>Liver</tissue>
    </source>
</reference>
<reference key="6">
    <citation type="submission" date="2009-03" db="PDB data bank">
        <title>Crystal structure of the PDZ domain of PDZ domain-containing protein GIPC2.</title>
        <authorList>
            <consortium name="Structural genomics consortium (SGC)"/>
        </authorList>
    </citation>
    <scope>X-RAY CRYSTALLOGRAPHY (2.6 ANGSTROMS) OF 112-200</scope>
</reference>
<gene>
    <name type="primary">GIPC2</name>
</gene>
<comment type="subunit">
    <text evidence="1">Probably interacts with SEMA5A.</text>
</comment>
<comment type="interaction">
    <interactant intactId="EBI-712067">
        <id>Q8TF65</id>
    </interactant>
    <interactant intactId="EBI-10295404">
        <id>Q99895</id>
        <label>CTRC</label>
    </interactant>
    <organismsDiffer>false</organismsDiffer>
    <experiments>3</experiments>
</comment>
<comment type="interaction">
    <interactant intactId="EBI-712067">
        <id>Q8TF65</id>
    </interactant>
    <interactant intactId="EBI-712067">
        <id>Q8TF65</id>
        <label>GIPC2</label>
    </interactant>
    <organismsDiffer>false</organismsDiffer>
    <experiments>7</experiments>
</comment>
<comment type="interaction">
    <interactant intactId="EBI-712067">
        <id>Q8TF65</id>
    </interactant>
    <interactant intactId="EBI-12035052">
        <id>A5PKX9</id>
        <label>INADL</label>
    </interactant>
    <organismsDiffer>false</organismsDiffer>
    <experiments>3</experiments>
</comment>
<comment type="interaction">
    <interactant intactId="EBI-712067">
        <id>Q8TF65</id>
    </interactant>
    <interactant intactId="EBI-751345">
        <id>Q15306</id>
        <label>IRF4</label>
    </interactant>
    <organismsDiffer>false</organismsDiffer>
    <experiments>5</experiments>
</comment>
<comment type="interaction">
    <interactant intactId="EBI-712067">
        <id>Q8TF65</id>
    </interactant>
    <interactant intactId="EBI-741037">
        <id>Q9BRK4</id>
        <label>LZTS2</label>
    </interactant>
    <organismsDiffer>false</organismsDiffer>
    <experiments>3</experiments>
</comment>
<comment type="interaction">
    <interactant intactId="EBI-712067">
        <id>Q8TF65</id>
    </interactant>
    <interactant intactId="EBI-4401947">
        <id>Q9HB19</id>
        <label>PLEKHA2</label>
    </interactant>
    <organismsDiffer>false</organismsDiffer>
    <experiments>8</experiments>
</comment>
<comment type="interaction">
    <interactant intactId="EBI-712067">
        <id>Q8TF65</id>
    </interactant>
    <interactant intactId="EBI-751145">
        <id>P23497</id>
        <label>SP100</label>
    </interactant>
    <organismsDiffer>false</organismsDiffer>
    <experiments>4</experiments>
</comment>
<comment type="interaction">
    <interactant intactId="EBI-712067">
        <id>Q8TF65</id>
    </interactant>
    <interactant intactId="EBI-6589365">
        <id>P23497-2</id>
        <label>SP100</label>
    </interactant>
    <organismsDiffer>false</organismsDiffer>
    <experiments>3</experiments>
</comment>
<comment type="interaction">
    <interactant intactId="EBI-712067">
        <id>Q8TF65</id>
    </interactant>
    <interactant intactId="EBI-10180829">
        <id>Q7KZS0</id>
        <label>UBE2I</label>
    </interactant>
    <organismsDiffer>false</organismsDiffer>
    <experiments>3</experiments>
</comment>
<comment type="interaction">
    <interactant intactId="EBI-712067">
        <id>Q8TF65</id>
    </interactant>
    <interactant intactId="EBI-3918996">
        <id>Q9HCK0</id>
        <label>ZBTB26</label>
    </interactant>
    <organismsDiffer>false</organismsDiffer>
    <experiments>3</experiments>
</comment>
<comment type="interaction">
    <interactant intactId="EBI-712067">
        <id>Q8TF65</id>
    </interactant>
    <interactant intactId="EBI-7265024">
        <id>Q8N3Z6</id>
        <label>ZCCHC7</label>
    </interactant>
    <organismsDiffer>false</organismsDiffer>
    <experiments>3</experiments>
</comment>
<comment type="subcellular location">
    <subcellularLocation>
        <location evidence="6">Cytoplasm</location>
    </subcellularLocation>
</comment>
<comment type="tissue specificity">
    <text evidence="4">Expressed at highest levels in ascending colon and at moderate levels in adult kidney. Expressed at low levels in adult pancreas and at very low levels in adult liver. Expression is down-regulated in several primary tumors, such as kidney, colon and rectal tumors.</text>
</comment>
<comment type="similarity">
    <text evidence="6">Belongs to the GIPC family.</text>
</comment>
<comment type="sequence caution" evidence="6">
    <conflict type="erroneous initiation">
        <sequence resource="EMBL-CDS" id="BAA90933"/>
    </conflict>
</comment>
<proteinExistence type="evidence at protein level"/>
<organism>
    <name type="scientific">Homo sapiens</name>
    <name type="common">Human</name>
    <dbReference type="NCBI Taxonomy" id="9606"/>
    <lineage>
        <taxon>Eukaryota</taxon>
        <taxon>Metazoa</taxon>
        <taxon>Chordata</taxon>
        <taxon>Craniata</taxon>
        <taxon>Vertebrata</taxon>
        <taxon>Euteleostomi</taxon>
        <taxon>Mammalia</taxon>
        <taxon>Eutheria</taxon>
        <taxon>Euarchontoglires</taxon>
        <taxon>Primates</taxon>
        <taxon>Haplorrhini</taxon>
        <taxon>Catarrhini</taxon>
        <taxon>Hominidae</taxon>
        <taxon>Homo</taxon>
    </lineage>
</organism>
<dbReference type="EMBL" id="AB073737">
    <property type="protein sequence ID" value="BAB84711.1"/>
    <property type="molecule type" value="mRNA"/>
</dbReference>
<dbReference type="EMBL" id="BC036075">
    <property type="protein sequence ID" value="AAH36075.1"/>
    <property type="molecule type" value="mRNA"/>
</dbReference>
<dbReference type="EMBL" id="AK000082">
    <property type="protein sequence ID" value="BAA90933.1"/>
    <property type="status" value="ALT_INIT"/>
    <property type="molecule type" value="mRNA"/>
</dbReference>
<dbReference type="CCDS" id="CCDS685.1"/>
<dbReference type="RefSeq" id="NP_001291654.1">
    <property type="nucleotide sequence ID" value="NM_001304725.1"/>
</dbReference>
<dbReference type="RefSeq" id="NP_060125.4">
    <property type="nucleotide sequence ID" value="NM_017655.5"/>
</dbReference>
<dbReference type="PDB" id="3GGE">
    <property type="method" value="X-ray"/>
    <property type="resolution" value="2.60 A"/>
    <property type="chains" value="A/B/C=112-200"/>
</dbReference>
<dbReference type="PDBsum" id="3GGE"/>
<dbReference type="SMR" id="Q8TF65"/>
<dbReference type="BioGRID" id="120167">
    <property type="interactions" value="31"/>
</dbReference>
<dbReference type="FunCoup" id="Q8TF65">
    <property type="interactions" value="175"/>
</dbReference>
<dbReference type="IntAct" id="Q8TF65">
    <property type="interactions" value="29"/>
</dbReference>
<dbReference type="MINT" id="Q8TF65"/>
<dbReference type="STRING" id="9606.ENSP00000359795"/>
<dbReference type="GlyGen" id="Q8TF65">
    <property type="glycosylation" value="1 site, 1 O-linked glycan (1 site)"/>
</dbReference>
<dbReference type="iPTMnet" id="Q8TF65"/>
<dbReference type="PhosphoSitePlus" id="Q8TF65"/>
<dbReference type="BioMuta" id="GIPC2"/>
<dbReference type="DMDM" id="74716120"/>
<dbReference type="jPOST" id="Q8TF65"/>
<dbReference type="MassIVE" id="Q8TF65"/>
<dbReference type="PaxDb" id="9606-ENSP00000359795"/>
<dbReference type="PeptideAtlas" id="Q8TF65"/>
<dbReference type="ProteomicsDB" id="74565"/>
<dbReference type="Pumba" id="Q8TF65"/>
<dbReference type="Antibodypedia" id="19742">
    <property type="antibodies" value="246 antibodies from 29 providers"/>
</dbReference>
<dbReference type="DNASU" id="54810"/>
<dbReference type="Ensembl" id="ENST00000370759.4">
    <property type="protein sequence ID" value="ENSP00000359795.3"/>
    <property type="gene ID" value="ENSG00000137960.6"/>
</dbReference>
<dbReference type="GeneID" id="54810"/>
<dbReference type="KEGG" id="hsa:54810"/>
<dbReference type="MANE-Select" id="ENST00000370759.4">
    <property type="protein sequence ID" value="ENSP00000359795.3"/>
    <property type="RefSeq nucleotide sequence ID" value="NM_017655.6"/>
    <property type="RefSeq protein sequence ID" value="NP_060125.4"/>
</dbReference>
<dbReference type="UCSC" id="uc001dik.4">
    <property type="organism name" value="human"/>
</dbReference>
<dbReference type="AGR" id="HGNC:18177"/>
<dbReference type="CTD" id="54810"/>
<dbReference type="DisGeNET" id="54810"/>
<dbReference type="GeneCards" id="GIPC2"/>
<dbReference type="HGNC" id="HGNC:18177">
    <property type="gene designation" value="GIPC2"/>
</dbReference>
<dbReference type="HPA" id="ENSG00000137960">
    <property type="expression patterns" value="Tissue enhanced (intestine, kidney, lymphoid tissue)"/>
</dbReference>
<dbReference type="MIM" id="619089">
    <property type="type" value="gene"/>
</dbReference>
<dbReference type="neXtProt" id="NX_Q8TF65"/>
<dbReference type="OpenTargets" id="ENSG00000137960"/>
<dbReference type="PharmGKB" id="PA142671735"/>
<dbReference type="VEuPathDB" id="HostDB:ENSG00000137960"/>
<dbReference type="eggNOG" id="KOG3938">
    <property type="taxonomic scope" value="Eukaryota"/>
</dbReference>
<dbReference type="GeneTree" id="ENSGT00390000003420"/>
<dbReference type="HOGENOM" id="CLU_044527_1_0_1"/>
<dbReference type="InParanoid" id="Q8TF65"/>
<dbReference type="OMA" id="VGWRHYE"/>
<dbReference type="OrthoDB" id="6509831at2759"/>
<dbReference type="PAN-GO" id="Q8TF65">
    <property type="GO annotations" value="0 GO annotations based on evolutionary models"/>
</dbReference>
<dbReference type="PhylomeDB" id="Q8TF65"/>
<dbReference type="TreeFam" id="TF313878"/>
<dbReference type="PathwayCommons" id="Q8TF65"/>
<dbReference type="SignaLink" id="Q8TF65"/>
<dbReference type="BioGRID-ORCS" id="54810">
    <property type="hits" value="18 hits in 1142 CRISPR screens"/>
</dbReference>
<dbReference type="ChiTaRS" id="GIPC2">
    <property type="organism name" value="human"/>
</dbReference>
<dbReference type="EvolutionaryTrace" id="Q8TF65"/>
<dbReference type="GeneWiki" id="GIPC2"/>
<dbReference type="GenomeRNAi" id="54810"/>
<dbReference type="Pharos" id="Q8TF65">
    <property type="development level" value="Tbio"/>
</dbReference>
<dbReference type="PRO" id="PR:Q8TF65"/>
<dbReference type="Proteomes" id="UP000005640">
    <property type="component" value="Chromosome 1"/>
</dbReference>
<dbReference type="RNAct" id="Q8TF65">
    <property type="molecule type" value="protein"/>
</dbReference>
<dbReference type="Bgee" id="ENSG00000137960">
    <property type="expression patterns" value="Expressed in jejunal mucosa and 136 other cell types or tissues"/>
</dbReference>
<dbReference type="ExpressionAtlas" id="Q8TF65">
    <property type="expression patterns" value="baseline and differential"/>
</dbReference>
<dbReference type="GO" id="GO:0005737">
    <property type="term" value="C:cytoplasm"/>
    <property type="evidence" value="ECO:0007669"/>
    <property type="project" value="UniProtKB-SubCell"/>
</dbReference>
<dbReference type="GO" id="GO:0070062">
    <property type="term" value="C:extracellular exosome"/>
    <property type="evidence" value="ECO:0007005"/>
    <property type="project" value="UniProtKB"/>
</dbReference>
<dbReference type="GO" id="GO:0042802">
    <property type="term" value="F:identical protein binding"/>
    <property type="evidence" value="ECO:0000353"/>
    <property type="project" value="IntAct"/>
</dbReference>
<dbReference type="CDD" id="cd21180">
    <property type="entry name" value="GH2_GIPC"/>
    <property type="match status" value="1"/>
</dbReference>
<dbReference type="CDD" id="cd23078">
    <property type="entry name" value="PDZ_GIPC2"/>
    <property type="match status" value="1"/>
</dbReference>
<dbReference type="FunFam" id="2.30.42.10:FF:000097">
    <property type="entry name" value="PDZ domain-containing protein GIPC1 isoform 1"/>
    <property type="match status" value="1"/>
</dbReference>
<dbReference type="Gene3D" id="2.30.42.10">
    <property type="match status" value="1"/>
</dbReference>
<dbReference type="InterPro" id="IPR055349">
    <property type="entry name" value="GH2_GIPC"/>
</dbReference>
<dbReference type="InterPro" id="IPR056814">
    <property type="entry name" value="GIPC1-3_GH1"/>
</dbReference>
<dbReference type="InterPro" id="IPR017379">
    <property type="entry name" value="GIPC1/2/3"/>
</dbReference>
<dbReference type="InterPro" id="IPR001478">
    <property type="entry name" value="PDZ"/>
</dbReference>
<dbReference type="InterPro" id="IPR036034">
    <property type="entry name" value="PDZ_sf"/>
</dbReference>
<dbReference type="PANTHER" id="PTHR12259:SF3">
    <property type="entry name" value="PDZ DOMAIN-CONTAINING PROTEIN GIPC2"/>
    <property type="match status" value="1"/>
</dbReference>
<dbReference type="PANTHER" id="PTHR12259">
    <property type="entry name" value="RGS-GAIP INTERACTING PROTEIN GIPC"/>
    <property type="match status" value="1"/>
</dbReference>
<dbReference type="Pfam" id="PF25083">
    <property type="entry name" value="GIPC1_GH1"/>
    <property type="match status" value="1"/>
</dbReference>
<dbReference type="Pfam" id="PF25082">
    <property type="entry name" value="GIPC1_GH2"/>
    <property type="match status" value="1"/>
</dbReference>
<dbReference type="Pfam" id="PF00595">
    <property type="entry name" value="PDZ"/>
    <property type="match status" value="1"/>
</dbReference>
<dbReference type="PIRSF" id="PIRSF038083">
    <property type="entry name" value="UCP038083_GIPC"/>
    <property type="match status" value="1"/>
</dbReference>
<dbReference type="SMART" id="SM00228">
    <property type="entry name" value="PDZ"/>
    <property type="match status" value="1"/>
</dbReference>
<dbReference type="SUPFAM" id="SSF50156">
    <property type="entry name" value="PDZ domain-like"/>
    <property type="match status" value="1"/>
</dbReference>
<dbReference type="PROSITE" id="PS50106">
    <property type="entry name" value="PDZ"/>
    <property type="match status" value="1"/>
</dbReference>
<keyword id="KW-0002">3D-structure</keyword>
<keyword id="KW-0963">Cytoplasm</keyword>
<keyword id="KW-1267">Proteomics identification</keyword>
<keyword id="KW-1185">Reference proteome</keyword>
<accession>Q8TF65</accession>
<accession>Q8IYD3</accession>
<accession>Q9NXS7</accession>
<protein>
    <recommendedName>
        <fullName>PDZ domain-containing protein GIPC2</fullName>
    </recommendedName>
</protein>
<evidence type="ECO:0000250" key="1"/>
<evidence type="ECO:0000255" key="2">
    <source>
        <dbReference type="PROSITE-ProRule" id="PRU00143"/>
    </source>
</evidence>
<evidence type="ECO:0000256" key="3">
    <source>
        <dbReference type="SAM" id="MobiDB-lite"/>
    </source>
</evidence>
<evidence type="ECO:0000269" key="4">
    <source>
    </source>
</evidence>
<evidence type="ECO:0000269" key="5">
    <source>
    </source>
</evidence>
<evidence type="ECO:0000305" key="6"/>
<evidence type="ECO:0007829" key="7">
    <source>
        <dbReference type="PDB" id="3GGE"/>
    </source>
</evidence>
<name>GIPC2_HUMAN</name>
<sequence>MPLKLRGKKKAKSKETAGLVEGEPTGAGGGSLSASRAPARRLVFHAQLAHGSATGRVEGFSSIQELYAQIAGAFEISPSEILYCTLNTPKIDMERLLGGQLGLEDFIFAHVKGIEKEVNVYKSEDSLGLTITDNGVGYAFIKRIKDGGVIDSVKTICVGDHIESINGENIVGWRHYDVAKKLKELKKEELFTMKLIEPKKAFEIELRSKAGKSSGEKIGCGRATLRLRSKGPATVEEMPSETKAKAIEKIDDVLELYMGIRDIDLATTMFEAGKDKVNPDEFAVALDETLGDFAFPDEFVFDVWGVIGDAKRRGL</sequence>